<name>YVDT_BACSU</name>
<evidence type="ECO:0000255" key="1">
    <source>
        <dbReference type="PROSITE-ProRule" id="PRU00335"/>
    </source>
</evidence>
<evidence type="ECO:0007829" key="2">
    <source>
        <dbReference type="PDB" id="2F07"/>
    </source>
</evidence>
<protein>
    <recommendedName>
        <fullName>Uncharacterized HTH-type transcriptional regulator YvdT</fullName>
    </recommendedName>
</protein>
<gene>
    <name type="primary">yvdT</name>
    <name type="ordered locus">BSU34480</name>
</gene>
<proteinExistence type="evidence at protein level"/>
<feature type="chain" id="PRO_0000360524" description="Uncharacterized HTH-type transcriptional regulator YvdT">
    <location>
        <begin position="1"/>
        <end position="194"/>
    </location>
</feature>
<feature type="domain" description="HTH tetR-type" evidence="1">
    <location>
        <begin position="6"/>
        <end position="66"/>
    </location>
</feature>
<feature type="DNA-binding region" description="H-T-H motif" evidence="1">
    <location>
        <begin position="29"/>
        <end position="48"/>
    </location>
</feature>
<feature type="helix" evidence="2">
    <location>
        <begin position="8"/>
        <end position="23"/>
    </location>
</feature>
<feature type="turn" evidence="2">
    <location>
        <begin position="25"/>
        <end position="27"/>
    </location>
</feature>
<feature type="helix" evidence="2">
    <location>
        <begin position="30"/>
        <end position="37"/>
    </location>
</feature>
<feature type="helix" evidence="2">
    <location>
        <begin position="41"/>
        <end position="47"/>
    </location>
</feature>
<feature type="strand" evidence="2">
    <location>
        <begin position="49"/>
        <end position="51"/>
    </location>
</feature>
<feature type="helix" evidence="2">
    <location>
        <begin position="54"/>
        <end position="72"/>
    </location>
</feature>
<feature type="helix" evidence="2">
    <location>
        <begin position="80"/>
        <end position="111"/>
    </location>
</feature>
<feature type="helix" evidence="2">
    <location>
        <begin position="115"/>
        <end position="138"/>
    </location>
</feature>
<feature type="helix" evidence="2">
    <location>
        <begin position="148"/>
        <end position="167"/>
    </location>
</feature>
<feature type="helix" evidence="2">
    <location>
        <begin position="176"/>
        <end position="191"/>
    </location>
</feature>
<sequence>MPKQTSGKYEKILQAAIEVISEKGLDKASISDIVKKAGTAQGTFYLYFSSKNALIPAIAENLLTHTLDQIKGRLHGDEDFWTVLDILIDETFLITERHKDIIVLCYSGLAIDHSMEKWETIYQPYYSWLEKIINKAIANHEVTEGINSKWTARTIINLVENTAERFYIGFEQDENVEVYKKEIFTFLKRSLGTA</sequence>
<accession>O07001</accession>
<accession>Q795H5</accession>
<organism>
    <name type="scientific">Bacillus subtilis (strain 168)</name>
    <dbReference type="NCBI Taxonomy" id="224308"/>
    <lineage>
        <taxon>Bacteria</taxon>
        <taxon>Bacillati</taxon>
        <taxon>Bacillota</taxon>
        <taxon>Bacilli</taxon>
        <taxon>Bacillales</taxon>
        <taxon>Bacillaceae</taxon>
        <taxon>Bacillus</taxon>
    </lineage>
</organism>
<reference key="1">
    <citation type="submission" date="1997-04" db="EMBL/GenBank/DDBJ databases">
        <authorList>
            <person name="Denizot F."/>
        </authorList>
    </citation>
    <scope>NUCLEOTIDE SEQUENCE [GENOMIC DNA]</scope>
    <source>
        <strain>168</strain>
    </source>
</reference>
<reference key="2">
    <citation type="journal article" date="1997" name="Nature">
        <title>The complete genome sequence of the Gram-positive bacterium Bacillus subtilis.</title>
        <authorList>
            <person name="Kunst F."/>
            <person name="Ogasawara N."/>
            <person name="Moszer I."/>
            <person name="Albertini A.M."/>
            <person name="Alloni G."/>
            <person name="Azevedo V."/>
            <person name="Bertero M.G."/>
            <person name="Bessieres P."/>
            <person name="Bolotin A."/>
            <person name="Borchert S."/>
            <person name="Borriss R."/>
            <person name="Boursier L."/>
            <person name="Brans A."/>
            <person name="Braun M."/>
            <person name="Brignell S.C."/>
            <person name="Bron S."/>
            <person name="Brouillet S."/>
            <person name="Bruschi C.V."/>
            <person name="Caldwell B."/>
            <person name="Capuano V."/>
            <person name="Carter N.M."/>
            <person name="Choi S.-K."/>
            <person name="Codani J.-J."/>
            <person name="Connerton I.F."/>
            <person name="Cummings N.J."/>
            <person name="Daniel R.A."/>
            <person name="Denizot F."/>
            <person name="Devine K.M."/>
            <person name="Duesterhoeft A."/>
            <person name="Ehrlich S.D."/>
            <person name="Emmerson P.T."/>
            <person name="Entian K.-D."/>
            <person name="Errington J."/>
            <person name="Fabret C."/>
            <person name="Ferrari E."/>
            <person name="Foulger D."/>
            <person name="Fritz C."/>
            <person name="Fujita M."/>
            <person name="Fujita Y."/>
            <person name="Fuma S."/>
            <person name="Galizzi A."/>
            <person name="Galleron N."/>
            <person name="Ghim S.-Y."/>
            <person name="Glaser P."/>
            <person name="Goffeau A."/>
            <person name="Golightly E.J."/>
            <person name="Grandi G."/>
            <person name="Guiseppi G."/>
            <person name="Guy B.J."/>
            <person name="Haga K."/>
            <person name="Haiech J."/>
            <person name="Harwood C.R."/>
            <person name="Henaut A."/>
            <person name="Hilbert H."/>
            <person name="Holsappel S."/>
            <person name="Hosono S."/>
            <person name="Hullo M.-F."/>
            <person name="Itaya M."/>
            <person name="Jones L.-M."/>
            <person name="Joris B."/>
            <person name="Karamata D."/>
            <person name="Kasahara Y."/>
            <person name="Klaerr-Blanchard M."/>
            <person name="Klein C."/>
            <person name="Kobayashi Y."/>
            <person name="Koetter P."/>
            <person name="Koningstein G."/>
            <person name="Krogh S."/>
            <person name="Kumano M."/>
            <person name="Kurita K."/>
            <person name="Lapidus A."/>
            <person name="Lardinois S."/>
            <person name="Lauber J."/>
            <person name="Lazarevic V."/>
            <person name="Lee S.-M."/>
            <person name="Levine A."/>
            <person name="Liu H."/>
            <person name="Masuda S."/>
            <person name="Mauel C."/>
            <person name="Medigue C."/>
            <person name="Medina N."/>
            <person name="Mellado R.P."/>
            <person name="Mizuno M."/>
            <person name="Moestl D."/>
            <person name="Nakai S."/>
            <person name="Noback M."/>
            <person name="Noone D."/>
            <person name="O'Reilly M."/>
            <person name="Ogawa K."/>
            <person name="Ogiwara A."/>
            <person name="Oudega B."/>
            <person name="Park S.-H."/>
            <person name="Parro V."/>
            <person name="Pohl T.M."/>
            <person name="Portetelle D."/>
            <person name="Porwollik S."/>
            <person name="Prescott A.M."/>
            <person name="Presecan E."/>
            <person name="Pujic P."/>
            <person name="Purnelle B."/>
            <person name="Rapoport G."/>
            <person name="Rey M."/>
            <person name="Reynolds S."/>
            <person name="Rieger M."/>
            <person name="Rivolta C."/>
            <person name="Rocha E."/>
            <person name="Roche B."/>
            <person name="Rose M."/>
            <person name="Sadaie Y."/>
            <person name="Sato T."/>
            <person name="Scanlan E."/>
            <person name="Schleich S."/>
            <person name="Schroeter R."/>
            <person name="Scoffone F."/>
            <person name="Sekiguchi J."/>
            <person name="Sekowska A."/>
            <person name="Seror S.J."/>
            <person name="Serror P."/>
            <person name="Shin B.-S."/>
            <person name="Soldo B."/>
            <person name="Sorokin A."/>
            <person name="Tacconi E."/>
            <person name="Takagi T."/>
            <person name="Takahashi H."/>
            <person name="Takemaru K."/>
            <person name="Takeuchi M."/>
            <person name="Tamakoshi A."/>
            <person name="Tanaka T."/>
            <person name="Terpstra P."/>
            <person name="Tognoni A."/>
            <person name="Tosato V."/>
            <person name="Uchiyama S."/>
            <person name="Vandenbol M."/>
            <person name="Vannier F."/>
            <person name="Vassarotti A."/>
            <person name="Viari A."/>
            <person name="Wambutt R."/>
            <person name="Wedler E."/>
            <person name="Wedler H."/>
            <person name="Weitzenegger T."/>
            <person name="Winters P."/>
            <person name="Wipat A."/>
            <person name="Yamamoto H."/>
            <person name="Yamane K."/>
            <person name="Yasumoto K."/>
            <person name="Yata K."/>
            <person name="Yoshida K."/>
            <person name="Yoshikawa H.-F."/>
            <person name="Zumstein E."/>
            <person name="Yoshikawa H."/>
            <person name="Danchin A."/>
        </authorList>
    </citation>
    <scope>NUCLEOTIDE SEQUENCE [LARGE SCALE GENOMIC DNA]</scope>
    <source>
        <strain>168</strain>
    </source>
</reference>
<reference key="3">
    <citation type="journal article" date="2005" name="Microbiol. Mol. Biol. Rev.">
        <title>The TetR family of transcriptional repressors.</title>
        <authorList>
            <person name="Ramos J.L."/>
            <person name="Martinez-Bueno M."/>
            <person name="Molina-Henares A.J."/>
            <person name="Teran W."/>
            <person name="Watanabe K."/>
            <person name="Zhang X."/>
            <person name="Gallegos M.T."/>
            <person name="Brennan R."/>
            <person name="Tobes R."/>
        </authorList>
    </citation>
    <scope>REVIEW</scope>
    <scope>GENE FAMILY</scope>
</reference>
<reference key="4">
    <citation type="submission" date="2006-11" db="PDB data bank">
        <title>Crystal structure of yvdT from Bacillus subtilis.</title>
        <authorList>
            <person name="Su X.-D."/>
            <person name="Yu Y.-M."/>
            <person name="Nan J."/>
        </authorList>
    </citation>
    <scope>X-RAY CRYSTALLOGRAPHY (2.30 ANGSTROMS)</scope>
</reference>
<dbReference type="EMBL" id="Z94043">
    <property type="protein sequence ID" value="CAB08049.1"/>
    <property type="molecule type" value="Genomic_DNA"/>
</dbReference>
<dbReference type="EMBL" id="AL009126">
    <property type="protein sequence ID" value="CAB15453.1"/>
    <property type="molecule type" value="Genomic_DNA"/>
</dbReference>
<dbReference type="PIR" id="C70035">
    <property type="entry name" value="C70035"/>
</dbReference>
<dbReference type="RefSeq" id="NP_391328.1">
    <property type="nucleotide sequence ID" value="NC_000964.3"/>
</dbReference>
<dbReference type="RefSeq" id="WP_003244443.1">
    <property type="nucleotide sequence ID" value="NZ_OZ025638.1"/>
</dbReference>
<dbReference type="PDB" id="2F07">
    <property type="method" value="X-ray"/>
    <property type="resolution" value="2.30 A"/>
    <property type="chains" value="A/B=1-194"/>
</dbReference>
<dbReference type="PDBsum" id="2F07"/>
<dbReference type="SMR" id="O07001"/>
<dbReference type="FunCoup" id="O07001">
    <property type="interactions" value="6"/>
</dbReference>
<dbReference type="STRING" id="224308.BSU34480"/>
<dbReference type="PaxDb" id="224308-BSU34480"/>
<dbReference type="EnsemblBacteria" id="CAB15453">
    <property type="protein sequence ID" value="CAB15453"/>
    <property type="gene ID" value="BSU_34480"/>
</dbReference>
<dbReference type="GeneID" id="936423"/>
<dbReference type="KEGG" id="bsu:BSU34480"/>
<dbReference type="PATRIC" id="fig|224308.179.peg.3735"/>
<dbReference type="eggNOG" id="COG1309">
    <property type="taxonomic scope" value="Bacteria"/>
</dbReference>
<dbReference type="InParanoid" id="O07001"/>
<dbReference type="OrthoDB" id="9812484at2"/>
<dbReference type="PhylomeDB" id="O07001"/>
<dbReference type="BioCyc" id="BSUB:BSU34480-MONOMER"/>
<dbReference type="EvolutionaryTrace" id="O07001"/>
<dbReference type="Proteomes" id="UP000001570">
    <property type="component" value="Chromosome"/>
</dbReference>
<dbReference type="GO" id="GO:0032993">
    <property type="term" value="C:protein-DNA complex"/>
    <property type="evidence" value="ECO:0000318"/>
    <property type="project" value="GO_Central"/>
</dbReference>
<dbReference type="GO" id="GO:0003677">
    <property type="term" value="F:DNA binding"/>
    <property type="evidence" value="ECO:0007669"/>
    <property type="project" value="UniProtKB-KW"/>
</dbReference>
<dbReference type="GO" id="GO:0003700">
    <property type="term" value="F:DNA-binding transcription factor activity"/>
    <property type="evidence" value="ECO:0000318"/>
    <property type="project" value="GO_Central"/>
</dbReference>
<dbReference type="Gene3D" id="1.10.357.10">
    <property type="entry name" value="Tetracycline Repressor, domain 2"/>
    <property type="match status" value="1"/>
</dbReference>
<dbReference type="InterPro" id="IPR009057">
    <property type="entry name" value="Homeodomain-like_sf"/>
</dbReference>
<dbReference type="InterPro" id="IPR050624">
    <property type="entry name" value="HTH-type_Tx_Regulator"/>
</dbReference>
<dbReference type="InterPro" id="IPR001647">
    <property type="entry name" value="HTH_TetR"/>
</dbReference>
<dbReference type="InterPro" id="IPR036271">
    <property type="entry name" value="Tet_transcr_reg_TetR-rel_C_sf"/>
</dbReference>
<dbReference type="InterPro" id="IPR041603">
    <property type="entry name" value="YvdT_C"/>
</dbReference>
<dbReference type="PANTHER" id="PTHR43479">
    <property type="entry name" value="ACREF/ENVCD OPERON REPRESSOR-RELATED"/>
    <property type="match status" value="1"/>
</dbReference>
<dbReference type="PANTHER" id="PTHR43479:SF8">
    <property type="entry name" value="TRANSCRIPTIONAL REGULATOR, TETR FAMILY"/>
    <property type="match status" value="1"/>
</dbReference>
<dbReference type="Pfam" id="PF17934">
    <property type="entry name" value="TetR_C_26"/>
    <property type="match status" value="1"/>
</dbReference>
<dbReference type="Pfam" id="PF00440">
    <property type="entry name" value="TetR_N"/>
    <property type="match status" value="1"/>
</dbReference>
<dbReference type="PRINTS" id="PR00455">
    <property type="entry name" value="HTHTETR"/>
</dbReference>
<dbReference type="SUPFAM" id="SSF46689">
    <property type="entry name" value="Homeodomain-like"/>
    <property type="match status" value="1"/>
</dbReference>
<dbReference type="SUPFAM" id="SSF48498">
    <property type="entry name" value="Tetracyclin repressor-like, C-terminal domain"/>
    <property type="match status" value="1"/>
</dbReference>
<dbReference type="PROSITE" id="PS50977">
    <property type="entry name" value="HTH_TETR_2"/>
    <property type="match status" value="1"/>
</dbReference>
<keyword id="KW-0002">3D-structure</keyword>
<keyword id="KW-0238">DNA-binding</keyword>
<keyword id="KW-1185">Reference proteome</keyword>
<keyword id="KW-0678">Repressor</keyword>
<keyword id="KW-0804">Transcription</keyword>
<keyword id="KW-0805">Transcription regulation</keyword>